<feature type="chain" id="PRO_0000368420" description="ATP synthase subunit b">
    <location>
        <begin position="1"/>
        <end position="159"/>
    </location>
</feature>
<feature type="transmembrane region" description="Helical" evidence="1">
    <location>
        <begin position="7"/>
        <end position="27"/>
    </location>
</feature>
<accession>B2UZJ6</accession>
<gene>
    <name evidence="1" type="primary">atpF</name>
    <name type="ordered locus">CLH_0486</name>
</gene>
<sequence length="159" mass="18672">METNYSVIFMTIINFCILVAILKHFFWDKIKGIINERQDFVDEQLLKVDEDSEKARMYLLENQRILQTAKEEGKKITESQKEKANKVYDEIVEDANEEAKSLLERAKTDIQREKEKAEYEIKKQAVDLAIELSIKALEENIDESKHRELISNFITKVGM</sequence>
<name>ATPF_CLOBA</name>
<reference key="1">
    <citation type="submission" date="2008-05" db="EMBL/GenBank/DDBJ databases">
        <title>Complete genome sequence of Clostridium botulinum E3 str. Alaska E43.</title>
        <authorList>
            <person name="Brinkac L.M."/>
            <person name="Brown J.L."/>
            <person name="Bruce D."/>
            <person name="Detter C."/>
            <person name="Munk C."/>
            <person name="Smith L.A."/>
            <person name="Smith T.J."/>
            <person name="Sutton G."/>
            <person name="Brettin T.S."/>
        </authorList>
    </citation>
    <scope>NUCLEOTIDE SEQUENCE [LARGE SCALE GENOMIC DNA]</scope>
    <source>
        <strain>Alaska E43 / Type E3</strain>
    </source>
</reference>
<keyword id="KW-0066">ATP synthesis</keyword>
<keyword id="KW-1003">Cell membrane</keyword>
<keyword id="KW-0138">CF(0)</keyword>
<keyword id="KW-0375">Hydrogen ion transport</keyword>
<keyword id="KW-0406">Ion transport</keyword>
<keyword id="KW-0472">Membrane</keyword>
<keyword id="KW-0812">Transmembrane</keyword>
<keyword id="KW-1133">Transmembrane helix</keyword>
<keyword id="KW-0813">Transport</keyword>
<organism>
    <name type="scientific">Clostridium botulinum (strain Alaska E43 / Type E3)</name>
    <dbReference type="NCBI Taxonomy" id="508767"/>
    <lineage>
        <taxon>Bacteria</taxon>
        <taxon>Bacillati</taxon>
        <taxon>Bacillota</taxon>
        <taxon>Clostridia</taxon>
        <taxon>Eubacteriales</taxon>
        <taxon>Clostridiaceae</taxon>
        <taxon>Clostridium</taxon>
    </lineage>
</organism>
<evidence type="ECO:0000255" key="1">
    <source>
        <dbReference type="HAMAP-Rule" id="MF_01398"/>
    </source>
</evidence>
<proteinExistence type="inferred from homology"/>
<comment type="function">
    <text evidence="1">F(1)F(0) ATP synthase produces ATP from ADP in the presence of a proton or sodium gradient. F-type ATPases consist of two structural domains, F(1) containing the extramembraneous catalytic core and F(0) containing the membrane proton channel, linked together by a central stalk and a peripheral stalk. During catalysis, ATP synthesis in the catalytic domain of F(1) is coupled via a rotary mechanism of the central stalk subunits to proton translocation.</text>
</comment>
<comment type="function">
    <text evidence="1">Component of the F(0) channel, it forms part of the peripheral stalk, linking F(1) to F(0).</text>
</comment>
<comment type="subunit">
    <text evidence="1">F-type ATPases have 2 components, F(1) - the catalytic core - and F(0) - the membrane proton channel. F(1) has five subunits: alpha(3), beta(3), gamma(1), delta(1), epsilon(1). F(0) has three main subunits: a(1), b(2) and c(10-14). The alpha and beta chains form an alternating ring which encloses part of the gamma chain. F(1) is attached to F(0) by a central stalk formed by the gamma and epsilon chains, while a peripheral stalk is formed by the delta and b chains.</text>
</comment>
<comment type="subcellular location">
    <subcellularLocation>
        <location evidence="1">Cell membrane</location>
        <topology evidence="1">Single-pass membrane protein</topology>
    </subcellularLocation>
</comment>
<comment type="similarity">
    <text evidence="1">Belongs to the ATPase B chain family.</text>
</comment>
<dbReference type="EMBL" id="CP001078">
    <property type="protein sequence ID" value="ACD52871.1"/>
    <property type="molecule type" value="Genomic_DNA"/>
</dbReference>
<dbReference type="RefSeq" id="WP_012424573.1">
    <property type="nucleotide sequence ID" value="NC_010723.1"/>
</dbReference>
<dbReference type="SMR" id="B2UZJ6"/>
<dbReference type="KEGG" id="cbt:CLH_0486"/>
<dbReference type="HOGENOM" id="CLU_079215_4_0_9"/>
<dbReference type="GO" id="GO:0005886">
    <property type="term" value="C:plasma membrane"/>
    <property type="evidence" value="ECO:0007669"/>
    <property type="project" value="UniProtKB-SubCell"/>
</dbReference>
<dbReference type="GO" id="GO:0045259">
    <property type="term" value="C:proton-transporting ATP synthase complex"/>
    <property type="evidence" value="ECO:0007669"/>
    <property type="project" value="UniProtKB-KW"/>
</dbReference>
<dbReference type="GO" id="GO:0046933">
    <property type="term" value="F:proton-transporting ATP synthase activity, rotational mechanism"/>
    <property type="evidence" value="ECO:0007669"/>
    <property type="project" value="UniProtKB-UniRule"/>
</dbReference>
<dbReference type="GO" id="GO:0046961">
    <property type="term" value="F:proton-transporting ATPase activity, rotational mechanism"/>
    <property type="evidence" value="ECO:0007669"/>
    <property type="project" value="TreeGrafter"/>
</dbReference>
<dbReference type="CDD" id="cd06503">
    <property type="entry name" value="ATP-synt_Fo_b"/>
    <property type="match status" value="1"/>
</dbReference>
<dbReference type="Gene3D" id="1.20.5.620">
    <property type="entry name" value="F1F0 ATP synthase subunit B, membrane domain"/>
    <property type="match status" value="1"/>
</dbReference>
<dbReference type="HAMAP" id="MF_01398">
    <property type="entry name" value="ATP_synth_b_bprime"/>
    <property type="match status" value="1"/>
</dbReference>
<dbReference type="InterPro" id="IPR028987">
    <property type="entry name" value="ATP_synth_B-like_membr_sf"/>
</dbReference>
<dbReference type="InterPro" id="IPR002146">
    <property type="entry name" value="ATP_synth_b/b'su_bac/chlpt"/>
</dbReference>
<dbReference type="InterPro" id="IPR005864">
    <property type="entry name" value="ATP_synth_F0_bsu_bac"/>
</dbReference>
<dbReference type="InterPro" id="IPR050059">
    <property type="entry name" value="ATP_synthase_B_chain"/>
</dbReference>
<dbReference type="NCBIfam" id="TIGR01144">
    <property type="entry name" value="ATP_synt_b"/>
    <property type="match status" value="1"/>
</dbReference>
<dbReference type="NCBIfam" id="NF009992">
    <property type="entry name" value="PRK13461.1"/>
    <property type="match status" value="1"/>
</dbReference>
<dbReference type="PANTHER" id="PTHR33445:SF1">
    <property type="entry name" value="ATP SYNTHASE SUBUNIT B"/>
    <property type="match status" value="1"/>
</dbReference>
<dbReference type="PANTHER" id="PTHR33445">
    <property type="entry name" value="ATP SYNTHASE SUBUNIT B', CHLOROPLASTIC"/>
    <property type="match status" value="1"/>
</dbReference>
<dbReference type="Pfam" id="PF00430">
    <property type="entry name" value="ATP-synt_B"/>
    <property type="match status" value="1"/>
</dbReference>
<dbReference type="SUPFAM" id="SSF81573">
    <property type="entry name" value="F1F0 ATP synthase subunit B, membrane domain"/>
    <property type="match status" value="1"/>
</dbReference>
<protein>
    <recommendedName>
        <fullName evidence="1">ATP synthase subunit b</fullName>
    </recommendedName>
    <alternativeName>
        <fullName evidence="1">ATP synthase F(0) sector subunit b</fullName>
    </alternativeName>
    <alternativeName>
        <fullName evidence="1">ATPase subunit I</fullName>
    </alternativeName>
    <alternativeName>
        <fullName evidence="1">F-type ATPase subunit b</fullName>
        <shortName evidence="1">F-ATPase subunit b</shortName>
    </alternativeName>
</protein>